<dbReference type="EC" id="1.14.99.46" evidence="1"/>
<dbReference type="EMBL" id="CP000629">
    <property type="protein sequence ID" value="ACM28653.1"/>
    <property type="molecule type" value="Genomic_DNA"/>
</dbReference>
<dbReference type="RefSeq" id="WP_012649158.1">
    <property type="nucleotide sequence ID" value="NC_011983.1"/>
</dbReference>
<dbReference type="SMR" id="B9JLT9"/>
<dbReference type="STRING" id="311403.Arad_7073"/>
<dbReference type="KEGG" id="ara:Arad_7073"/>
<dbReference type="eggNOG" id="COG2141">
    <property type="taxonomic scope" value="Bacteria"/>
</dbReference>
<dbReference type="HOGENOM" id="CLU_027853_1_1_5"/>
<dbReference type="Proteomes" id="UP000001600">
    <property type="component" value="Chromosome 2"/>
</dbReference>
<dbReference type="GO" id="GO:0008726">
    <property type="term" value="F:alkanesulfonate monooxygenase activity"/>
    <property type="evidence" value="ECO:0007669"/>
    <property type="project" value="TreeGrafter"/>
</dbReference>
<dbReference type="GO" id="GO:0052614">
    <property type="term" value="F:uracil oxygenase activity"/>
    <property type="evidence" value="ECO:0007669"/>
    <property type="project" value="UniProtKB-EC"/>
</dbReference>
<dbReference type="GO" id="GO:0046306">
    <property type="term" value="P:alkanesulfonate catabolic process"/>
    <property type="evidence" value="ECO:0007669"/>
    <property type="project" value="TreeGrafter"/>
</dbReference>
<dbReference type="GO" id="GO:0019740">
    <property type="term" value="P:nitrogen utilization"/>
    <property type="evidence" value="ECO:0007669"/>
    <property type="project" value="UniProtKB-UniRule"/>
</dbReference>
<dbReference type="GO" id="GO:0006212">
    <property type="term" value="P:uracil catabolic process"/>
    <property type="evidence" value="ECO:0007669"/>
    <property type="project" value="UniProtKB-UniRule"/>
</dbReference>
<dbReference type="CDD" id="cd01094">
    <property type="entry name" value="Alkanesulfonate_monoxygenase"/>
    <property type="match status" value="1"/>
</dbReference>
<dbReference type="FunFam" id="3.20.20.30:FF:000003">
    <property type="entry name" value="Pyrimidine monooxygenase RutA"/>
    <property type="match status" value="1"/>
</dbReference>
<dbReference type="Gene3D" id="3.20.20.30">
    <property type="entry name" value="Luciferase-like domain"/>
    <property type="match status" value="1"/>
</dbReference>
<dbReference type="HAMAP" id="MF_01699">
    <property type="entry name" value="RutA"/>
    <property type="match status" value="1"/>
</dbReference>
<dbReference type="InterPro" id="IPR011251">
    <property type="entry name" value="Luciferase-like_dom"/>
</dbReference>
<dbReference type="InterPro" id="IPR036661">
    <property type="entry name" value="Luciferase-like_sf"/>
</dbReference>
<dbReference type="InterPro" id="IPR019914">
    <property type="entry name" value="Pyrimidine_monooxygenase_RutA"/>
</dbReference>
<dbReference type="InterPro" id="IPR050172">
    <property type="entry name" value="SsuD_RutA_monooxygenase"/>
</dbReference>
<dbReference type="NCBIfam" id="TIGR03612">
    <property type="entry name" value="RutA"/>
    <property type="match status" value="1"/>
</dbReference>
<dbReference type="PANTHER" id="PTHR42847">
    <property type="entry name" value="ALKANESULFONATE MONOOXYGENASE"/>
    <property type="match status" value="1"/>
</dbReference>
<dbReference type="PANTHER" id="PTHR42847:SF4">
    <property type="entry name" value="ALKANESULFONATE MONOOXYGENASE-RELATED"/>
    <property type="match status" value="1"/>
</dbReference>
<dbReference type="Pfam" id="PF00296">
    <property type="entry name" value="Bac_luciferase"/>
    <property type="match status" value="1"/>
</dbReference>
<dbReference type="SUPFAM" id="SSF51679">
    <property type="entry name" value="Bacterial luciferase-like"/>
    <property type="match status" value="1"/>
</dbReference>
<organism>
    <name type="scientific">Rhizobium rhizogenes (strain K84 / ATCC BAA-868)</name>
    <name type="common">Agrobacterium radiobacter</name>
    <dbReference type="NCBI Taxonomy" id="311403"/>
    <lineage>
        <taxon>Bacteria</taxon>
        <taxon>Pseudomonadati</taxon>
        <taxon>Pseudomonadota</taxon>
        <taxon>Alphaproteobacteria</taxon>
        <taxon>Hyphomicrobiales</taxon>
        <taxon>Rhizobiaceae</taxon>
        <taxon>Rhizobium/Agrobacterium group</taxon>
        <taxon>Rhizobium</taxon>
    </lineage>
</organism>
<name>RUTA_RHIR8</name>
<accession>B9JLT9</accession>
<keyword id="KW-0285">Flavoprotein</keyword>
<keyword id="KW-0288">FMN</keyword>
<keyword id="KW-0503">Monooxygenase</keyword>
<keyword id="KW-0521">NADP</keyword>
<keyword id="KW-0560">Oxidoreductase</keyword>
<protein>
    <recommendedName>
        <fullName evidence="1">Pyrimidine monooxygenase RutA</fullName>
        <ecNumber evidence="1">1.14.99.46</ecNumber>
    </recommendedName>
</protein>
<comment type="function">
    <text evidence="1">Catalyzes the pyrimidine ring opening between N-3 and C-4 by an unusual flavin hydroperoxide-catalyzed mechanism, adding oxygen atoms in the process to yield ureidoacrylate peracid, that immediately reacts with FMN forming ureidoacrylate and FMN-N(5)-oxide. The FMN-N(5)-oxide reacts spontaneously with NADH to produce FMN. Requires the flavin reductase RutF to regenerate FMN in vivo.</text>
</comment>
<comment type="catalytic activity">
    <reaction evidence="1">
        <text>uracil + FMNH2 + NADH + O2 = (Z)-3-ureidoacrylate + FMN + NAD(+) + H2O + H(+)</text>
        <dbReference type="Rhea" id="RHEA:31587"/>
        <dbReference type="ChEBI" id="CHEBI:15377"/>
        <dbReference type="ChEBI" id="CHEBI:15378"/>
        <dbReference type="ChEBI" id="CHEBI:15379"/>
        <dbReference type="ChEBI" id="CHEBI:17568"/>
        <dbReference type="ChEBI" id="CHEBI:57540"/>
        <dbReference type="ChEBI" id="CHEBI:57618"/>
        <dbReference type="ChEBI" id="CHEBI:57945"/>
        <dbReference type="ChEBI" id="CHEBI:58210"/>
        <dbReference type="ChEBI" id="CHEBI:59891"/>
        <dbReference type="EC" id="1.14.99.46"/>
    </reaction>
</comment>
<comment type="catalytic activity">
    <reaction evidence="1">
        <text>thymine + FMNH2 + NADH + O2 = (Z)-2-methylureidoacrylate + FMN + NAD(+) + H2O + H(+)</text>
        <dbReference type="Rhea" id="RHEA:31599"/>
        <dbReference type="ChEBI" id="CHEBI:15377"/>
        <dbReference type="ChEBI" id="CHEBI:15378"/>
        <dbReference type="ChEBI" id="CHEBI:15379"/>
        <dbReference type="ChEBI" id="CHEBI:17821"/>
        <dbReference type="ChEBI" id="CHEBI:57540"/>
        <dbReference type="ChEBI" id="CHEBI:57618"/>
        <dbReference type="ChEBI" id="CHEBI:57945"/>
        <dbReference type="ChEBI" id="CHEBI:58210"/>
        <dbReference type="ChEBI" id="CHEBI:143783"/>
        <dbReference type="EC" id="1.14.99.46"/>
    </reaction>
</comment>
<comment type="similarity">
    <text evidence="1">Belongs to the NtaA/SnaA/DszA monooxygenase family. RutA subfamily.</text>
</comment>
<feature type="chain" id="PRO_0000402582" description="Pyrimidine monooxygenase RutA">
    <location>
        <begin position="1"/>
        <end position="363"/>
    </location>
</feature>
<feature type="binding site" evidence="1">
    <location>
        <begin position="49"/>
        <end position="50"/>
    </location>
    <ligand>
        <name>FMN</name>
        <dbReference type="ChEBI" id="CHEBI:58210"/>
    </ligand>
</feature>
<feature type="binding site" evidence="1">
    <location>
        <position position="115"/>
    </location>
    <ligand>
        <name>FMN</name>
        <dbReference type="ChEBI" id="CHEBI:58210"/>
    </ligand>
</feature>
<feature type="binding site" evidence="1">
    <location>
        <position position="124"/>
    </location>
    <ligand>
        <name>FMN</name>
        <dbReference type="ChEBI" id="CHEBI:58210"/>
    </ligand>
</feature>
<feature type="binding site" evidence="1">
    <location>
        <begin position="140"/>
        <end position="141"/>
    </location>
    <ligand>
        <name>FMN</name>
        <dbReference type="ChEBI" id="CHEBI:58210"/>
    </ligand>
</feature>
<feature type="binding site" evidence="1">
    <location>
        <position position="190"/>
    </location>
    <ligand>
        <name>FMN</name>
        <dbReference type="ChEBI" id="CHEBI:58210"/>
    </ligand>
</feature>
<evidence type="ECO:0000255" key="1">
    <source>
        <dbReference type="HAMAP-Rule" id="MF_01699"/>
    </source>
</evidence>
<proteinExistence type="inferred from homology"/>
<sequence>MEIGVFIPIGNNGWLLSENAPQYKPSFELNKEITLKAEKYGFDFVLSMIKLRGFGGKTEFWDHNLESFTLMSGLAAVTTRIKLFATAATLVMPPAIVARMASTIDSISNGRFGLNLVTGWQRPEYSQMGMWPGDEYFAKRYDYLGEYATVLRDLWETGKSDLKGEFFQMDDCRLSPRPQADMKVICAGSSTAGMEFSAQYADYNFCFGVGVNTPKAFAPAAERLQVATAKTGRDVSSFVLFMVIADETDEAARAKWESYKDGADQEAIAWLGVQGAADTKSGSDTNIRQMADSVSAVNINMGTLVGSYETIAKLLDEVPTVPGTGGVLLTFDDFVKGVEDFGTKIQPLMKCREHIKPMLEAAE</sequence>
<gene>
    <name evidence="1" type="primary">rutA</name>
    <name type="ordered locus">Arad_7073</name>
</gene>
<reference key="1">
    <citation type="journal article" date="2009" name="J. Bacteriol.">
        <title>Genome sequences of three Agrobacterium biovars help elucidate the evolution of multichromosome genomes in bacteria.</title>
        <authorList>
            <person name="Slater S.C."/>
            <person name="Goldman B.S."/>
            <person name="Goodner B."/>
            <person name="Setubal J.C."/>
            <person name="Farrand S.K."/>
            <person name="Nester E.W."/>
            <person name="Burr T.J."/>
            <person name="Banta L."/>
            <person name="Dickerman A.W."/>
            <person name="Paulsen I."/>
            <person name="Otten L."/>
            <person name="Suen G."/>
            <person name="Welch R."/>
            <person name="Almeida N.F."/>
            <person name="Arnold F."/>
            <person name="Burton O.T."/>
            <person name="Du Z."/>
            <person name="Ewing A."/>
            <person name="Godsy E."/>
            <person name="Heisel S."/>
            <person name="Houmiel K.L."/>
            <person name="Jhaveri J."/>
            <person name="Lu J."/>
            <person name="Miller N.M."/>
            <person name="Norton S."/>
            <person name="Chen Q."/>
            <person name="Phoolcharoen W."/>
            <person name="Ohlin V."/>
            <person name="Ondrusek D."/>
            <person name="Pride N."/>
            <person name="Stricklin S.L."/>
            <person name="Sun J."/>
            <person name="Wheeler C."/>
            <person name="Wilson L."/>
            <person name="Zhu H."/>
            <person name="Wood D.W."/>
        </authorList>
    </citation>
    <scope>NUCLEOTIDE SEQUENCE [LARGE SCALE GENOMIC DNA]</scope>
    <source>
        <strain>K84 / ATCC BAA-868</strain>
    </source>
</reference>